<name>ROK1_YEAST</name>
<dbReference type="EC" id="3.6.4.13"/>
<dbReference type="EMBL" id="Z34901">
    <property type="protein sequence ID" value="CAA84384.1"/>
    <property type="molecule type" value="Genomic_DNA"/>
</dbReference>
<dbReference type="EMBL" id="X85757">
    <property type="protein sequence ID" value="CAA59758.1"/>
    <property type="molecule type" value="Genomic_DNA"/>
</dbReference>
<dbReference type="EMBL" id="Z72693">
    <property type="protein sequence ID" value="CAA96883.1"/>
    <property type="molecule type" value="Genomic_DNA"/>
</dbReference>
<dbReference type="EMBL" id="BK006941">
    <property type="protein sequence ID" value="DAA07942.1"/>
    <property type="molecule type" value="Genomic_DNA"/>
</dbReference>
<dbReference type="PIR" id="S59649">
    <property type="entry name" value="S59649"/>
</dbReference>
<dbReference type="RefSeq" id="NP_011344.1">
    <property type="nucleotide sequence ID" value="NM_001181036.1"/>
</dbReference>
<dbReference type="EMDB" id="EMD-6654"/>
<dbReference type="SMR" id="P45818"/>
<dbReference type="BioGRID" id="33082">
    <property type="interactions" value="126"/>
</dbReference>
<dbReference type="DIP" id="DIP-5111N"/>
<dbReference type="FunCoup" id="P45818">
    <property type="interactions" value="1247"/>
</dbReference>
<dbReference type="IntAct" id="P45818">
    <property type="interactions" value="79"/>
</dbReference>
<dbReference type="MINT" id="P45818"/>
<dbReference type="STRING" id="4932.YGL171W"/>
<dbReference type="GlyGen" id="P45818">
    <property type="glycosylation" value="1 site"/>
</dbReference>
<dbReference type="iPTMnet" id="P45818"/>
<dbReference type="PaxDb" id="4932-YGL171W"/>
<dbReference type="PeptideAtlas" id="P45818"/>
<dbReference type="TopDownProteomics" id="P45818"/>
<dbReference type="EnsemblFungi" id="YGL171W_mRNA">
    <property type="protein sequence ID" value="YGL171W"/>
    <property type="gene ID" value="YGL171W"/>
</dbReference>
<dbReference type="GeneID" id="852704"/>
<dbReference type="KEGG" id="sce:YGL171W"/>
<dbReference type="AGR" id="SGD:S000003139"/>
<dbReference type="SGD" id="S000003139">
    <property type="gene designation" value="ROK1"/>
</dbReference>
<dbReference type="VEuPathDB" id="FungiDB:YGL171W"/>
<dbReference type="eggNOG" id="KOG0344">
    <property type="taxonomic scope" value="Eukaryota"/>
</dbReference>
<dbReference type="GeneTree" id="ENSGT00550000074863"/>
<dbReference type="HOGENOM" id="CLU_003041_1_4_1"/>
<dbReference type="InParanoid" id="P45818"/>
<dbReference type="OMA" id="EMAHSIM"/>
<dbReference type="OrthoDB" id="360161at2759"/>
<dbReference type="BioCyc" id="YEAST:G3O-30659-MONOMER"/>
<dbReference type="Reactome" id="R-SCE-6791226">
    <property type="pathway name" value="Major pathway of rRNA processing in the nucleolus and cytosol"/>
</dbReference>
<dbReference type="SABIO-RK" id="P45818"/>
<dbReference type="BioGRID-ORCS" id="852704">
    <property type="hits" value="2 hits in 10 CRISPR screens"/>
</dbReference>
<dbReference type="CD-CODE" id="BDAE0F88">
    <property type="entry name" value="Nucleolus"/>
</dbReference>
<dbReference type="PRO" id="PR:P45818"/>
<dbReference type="Proteomes" id="UP000002311">
    <property type="component" value="Chromosome VII"/>
</dbReference>
<dbReference type="RNAct" id="P45818">
    <property type="molecule type" value="protein"/>
</dbReference>
<dbReference type="GO" id="GO:0030686">
    <property type="term" value="C:90S preribosome"/>
    <property type="evidence" value="ECO:0007005"/>
    <property type="project" value="SGD"/>
</dbReference>
<dbReference type="GO" id="GO:0005730">
    <property type="term" value="C:nucleolus"/>
    <property type="evidence" value="ECO:0000314"/>
    <property type="project" value="ComplexPortal"/>
</dbReference>
<dbReference type="GO" id="GO:0005654">
    <property type="term" value="C:nucleoplasm"/>
    <property type="evidence" value="ECO:0000304"/>
    <property type="project" value="Reactome"/>
</dbReference>
<dbReference type="GO" id="GO:0032040">
    <property type="term" value="C:small-subunit processome"/>
    <property type="evidence" value="ECO:0000353"/>
    <property type="project" value="ComplexPortal"/>
</dbReference>
<dbReference type="GO" id="GO:0005524">
    <property type="term" value="F:ATP binding"/>
    <property type="evidence" value="ECO:0007669"/>
    <property type="project" value="UniProtKB-KW"/>
</dbReference>
<dbReference type="GO" id="GO:0016887">
    <property type="term" value="F:ATP hydrolysis activity"/>
    <property type="evidence" value="ECO:0007669"/>
    <property type="project" value="RHEA"/>
</dbReference>
<dbReference type="GO" id="GO:0008186">
    <property type="term" value="F:ATP-dependent activity, acting on RNA"/>
    <property type="evidence" value="ECO:0000314"/>
    <property type="project" value="SGD"/>
</dbReference>
<dbReference type="GO" id="GO:0003723">
    <property type="term" value="F:RNA binding"/>
    <property type="evidence" value="ECO:0007669"/>
    <property type="project" value="UniProtKB-KW"/>
</dbReference>
<dbReference type="GO" id="GO:0003724">
    <property type="term" value="F:RNA helicase activity"/>
    <property type="evidence" value="ECO:0000314"/>
    <property type="project" value="SGD"/>
</dbReference>
<dbReference type="GO" id="GO:0000480">
    <property type="term" value="P:endonucleolytic cleavage in 5'-ETS of tricistronic rRNA transcript (SSU-rRNA, 5.8S rRNA, LSU-rRNA)"/>
    <property type="evidence" value="ECO:0000315"/>
    <property type="project" value="SGD"/>
</dbReference>
<dbReference type="GO" id="GO:0000447">
    <property type="term" value="P:endonucleolytic cleavage in ITS1 to separate SSU-rRNA from 5.8S rRNA and LSU-rRNA from tricistronic rRNA transcript (SSU-rRNA, 5.8S rRNA, LSU-rRNA)"/>
    <property type="evidence" value="ECO:0000315"/>
    <property type="project" value="SGD"/>
</dbReference>
<dbReference type="GO" id="GO:0000472">
    <property type="term" value="P:endonucleolytic cleavage to generate mature 5'-end of SSU-rRNA from (SSU-rRNA, 5.8S rRNA, LSU-rRNA)"/>
    <property type="evidence" value="ECO:0000315"/>
    <property type="project" value="SGD"/>
</dbReference>
<dbReference type="GO" id="GO:0030490">
    <property type="term" value="P:maturation of SSU-rRNA"/>
    <property type="evidence" value="ECO:0000314"/>
    <property type="project" value="SGD"/>
</dbReference>
<dbReference type="GO" id="GO:0048254">
    <property type="term" value="P:snoRNA localization"/>
    <property type="evidence" value="ECO:0000315"/>
    <property type="project" value="SGD"/>
</dbReference>
<dbReference type="CDD" id="cd17957">
    <property type="entry name" value="DEADc_DDX52"/>
    <property type="match status" value="1"/>
</dbReference>
<dbReference type="CDD" id="cd18787">
    <property type="entry name" value="SF2_C_DEAD"/>
    <property type="match status" value="1"/>
</dbReference>
<dbReference type="FunFam" id="3.40.50.300:FF:000759">
    <property type="entry name" value="probable ATP-dependent RNA helicase DDX52"/>
    <property type="match status" value="1"/>
</dbReference>
<dbReference type="FunFam" id="3.40.50.300:FF:002420">
    <property type="entry name" value="ROK1p RNA-dependent ATPase"/>
    <property type="match status" value="1"/>
</dbReference>
<dbReference type="Gene3D" id="3.40.50.300">
    <property type="entry name" value="P-loop containing nucleotide triphosphate hydrolases"/>
    <property type="match status" value="2"/>
</dbReference>
<dbReference type="InterPro" id="IPR044764">
    <property type="entry name" value="DDX52/Rok1_DEADc"/>
</dbReference>
<dbReference type="InterPro" id="IPR011545">
    <property type="entry name" value="DEAD/DEAH_box_helicase_dom"/>
</dbReference>
<dbReference type="InterPro" id="IPR050079">
    <property type="entry name" value="DEAD_box_RNA_helicase"/>
</dbReference>
<dbReference type="InterPro" id="IPR014001">
    <property type="entry name" value="Helicase_ATP-bd"/>
</dbReference>
<dbReference type="InterPro" id="IPR001650">
    <property type="entry name" value="Helicase_C-like"/>
</dbReference>
<dbReference type="InterPro" id="IPR027417">
    <property type="entry name" value="P-loop_NTPase"/>
</dbReference>
<dbReference type="InterPro" id="IPR000629">
    <property type="entry name" value="RNA-helicase_DEAD-box_CS"/>
</dbReference>
<dbReference type="InterPro" id="IPR014014">
    <property type="entry name" value="RNA_helicase_DEAD_Q_motif"/>
</dbReference>
<dbReference type="PANTHER" id="PTHR47959">
    <property type="entry name" value="ATP-DEPENDENT RNA HELICASE RHLE-RELATED"/>
    <property type="match status" value="1"/>
</dbReference>
<dbReference type="PANTHER" id="PTHR47959:SF15">
    <property type="entry name" value="RNA HELICASE"/>
    <property type="match status" value="1"/>
</dbReference>
<dbReference type="Pfam" id="PF00270">
    <property type="entry name" value="DEAD"/>
    <property type="match status" value="1"/>
</dbReference>
<dbReference type="Pfam" id="PF00271">
    <property type="entry name" value="Helicase_C"/>
    <property type="match status" value="1"/>
</dbReference>
<dbReference type="SMART" id="SM00487">
    <property type="entry name" value="DEXDc"/>
    <property type="match status" value="1"/>
</dbReference>
<dbReference type="SMART" id="SM00490">
    <property type="entry name" value="HELICc"/>
    <property type="match status" value="1"/>
</dbReference>
<dbReference type="SUPFAM" id="SSF52540">
    <property type="entry name" value="P-loop containing nucleoside triphosphate hydrolases"/>
    <property type="match status" value="1"/>
</dbReference>
<dbReference type="PROSITE" id="PS00039">
    <property type="entry name" value="DEAD_ATP_HELICASE"/>
    <property type="match status" value="1"/>
</dbReference>
<dbReference type="PROSITE" id="PS51192">
    <property type="entry name" value="HELICASE_ATP_BIND_1"/>
    <property type="match status" value="1"/>
</dbReference>
<dbReference type="PROSITE" id="PS51194">
    <property type="entry name" value="HELICASE_CTER"/>
    <property type="match status" value="1"/>
</dbReference>
<dbReference type="PROSITE" id="PS51195">
    <property type="entry name" value="Q_MOTIF"/>
    <property type="match status" value="1"/>
</dbReference>
<sequence length="564" mass="63653">MDIFRVLTRGASVKKESGPKAKAADYSVINGNDENHKEDNNESQIVKELDFFRNKRIISKVEDDREKTTENDSPNKEEKSGNDDGLIKPVITNTVEASALRKSYKGNVSGIDIPLPIGSFEDLISRFSFDKRLLNNLIENGFTEPTPIQCECIPVALNNRDVLACGPTGSGKTLAFLIPLVQQIIDDKQTAGLKGLIISPTKELANQIFIECFKLSYKIFLEKKRPLQVALLSKSLGAKLKNKVVSDKKYDIIISTPLRLIDVVKNEALDLSKVKHLIFDEADKLFDKTFVEQSDDILSACREPSLRKAMFSATIPSNVEEIAQSIMMDPVRVIIGHKEAANTNIEQKLIFCGNEEGKLIAIRQLVQEGEFKPPIIIFLESITRAKALYHELMYDRINVDVIHAERTALQRDRIIERFKTGELWCLICTDVLARGIDFKGVNLVINYDVPGSSQAYVHRIGRTGRGGRSGKAITFYTKQDSVAIKPIINVMKQSGCEVSEWMDKMAKMTRKEKESIKNGKAHKERKQITTVPKMDKAKRRRQQEMIAASKRRKNEELSKKHFSK</sequence>
<protein>
    <recommendedName>
        <fullName>ATP-dependent RNA helicase ROK1</fullName>
        <ecNumber>3.6.4.13</ecNumber>
    </recommendedName>
    <alternativeName>
        <fullName>Rescuer of KEM1 protein 1</fullName>
    </alternativeName>
</protein>
<comment type="function">
    <text evidence="4 6 7 9 10">ATP-dependent RNA helicase involved in 40S ribosomal subunit biogenesis. Required for the processing and cleavage of 35S pre-rRNA at sites A0, A1, and A2, leading to mature 18S rRNA. May also have a gene-specific regulatory function since it affects nuclear fusion by regulating KAR4 expression and contributes with KEM1 to ISP-1 sensitivity.</text>
</comment>
<comment type="catalytic activity">
    <reaction>
        <text>ATP + H2O = ADP + phosphate + H(+)</text>
        <dbReference type="Rhea" id="RHEA:13065"/>
        <dbReference type="ChEBI" id="CHEBI:15377"/>
        <dbReference type="ChEBI" id="CHEBI:15378"/>
        <dbReference type="ChEBI" id="CHEBI:30616"/>
        <dbReference type="ChEBI" id="CHEBI:43474"/>
        <dbReference type="ChEBI" id="CHEBI:456216"/>
        <dbReference type="EC" id="3.6.4.13"/>
    </reaction>
</comment>
<comment type="subunit">
    <text evidence="5 8">Interacts with the U3 snoRNA and is associated with the 90S and 40S pre-ribosomes. This association requires the presence of RRP5. Also interacts with OSH3.</text>
</comment>
<comment type="interaction">
    <interactant intactId="EBI-15686">
        <id>P45818</id>
    </interactant>
    <interactant intactId="EBI-12630">
        <id>P38713</id>
        <label>OSH3</label>
    </interactant>
    <organismsDiffer>false</organismsDiffer>
    <experiments>3</experiments>
</comment>
<comment type="interaction">
    <interactant intactId="EBI-15686">
        <id>P45818</id>
    </interactant>
    <interactant intactId="EBI-1878">
        <id>P53254</id>
        <label>UTP22</label>
    </interactant>
    <organismsDiffer>false</organismsDiffer>
    <experiments>4</experiments>
</comment>
<comment type="subcellular location">
    <subcellularLocation>
        <location evidence="9">Nucleus</location>
        <location evidence="9">Nucleolus</location>
    </subcellularLocation>
</comment>
<comment type="domain">
    <text>The Q motif is unique to and characteristic of the DEAD box family of RNA helicases and controls ATP binding and hydrolysis.</text>
</comment>
<comment type="similarity">
    <text evidence="11">Belongs to the DEAD box helicase family. DDX52/ROK1 subfamily.</text>
</comment>
<reference key="1">
    <citation type="journal article" date="1995" name="Gene">
        <title>ROK1, a high-copy-number plasmid suppressor of kem1, encodes a putative ATP-dependent RNA helicase in Saccharomyces cerevisiae.</title>
        <authorList>
            <person name="Song Y."/>
            <person name="Kim S."/>
            <person name="Kim J."/>
        </authorList>
    </citation>
    <scope>NUCLEOTIDE SEQUENCE [GENOMIC DNA]</scope>
</reference>
<reference key="2">
    <citation type="journal article" date="1996" name="Yeast">
        <title>A putative helicase, the SUA5, PMR1, tRNALys1 genes and four open reading frames have been detected in the DNA sequence of an 8.8 kb fragment of the left arm of chromosome VII of Saccharomyces cerevisiae.</title>
        <authorList>
            <person name="Klima R."/>
            <person name="Coglievina M."/>
            <person name="Zaccaria P."/>
            <person name="Bertani I."/>
            <person name="Bruschi C.V."/>
        </authorList>
    </citation>
    <scope>NUCLEOTIDE SEQUENCE [GENOMIC DNA]</scope>
    <source>
        <strain>ATCC 96604 / S288c / FY1679</strain>
    </source>
</reference>
<reference key="3">
    <citation type="journal article" date="1997" name="Nature">
        <title>The nucleotide sequence of Saccharomyces cerevisiae chromosome VII.</title>
        <authorList>
            <person name="Tettelin H."/>
            <person name="Agostoni-Carbone M.L."/>
            <person name="Albermann K."/>
            <person name="Albers M."/>
            <person name="Arroyo J."/>
            <person name="Backes U."/>
            <person name="Barreiros T."/>
            <person name="Bertani I."/>
            <person name="Bjourson A.J."/>
            <person name="Brueckner M."/>
            <person name="Bruschi C.V."/>
            <person name="Carignani G."/>
            <person name="Castagnoli L."/>
            <person name="Cerdan E."/>
            <person name="Clemente M.L."/>
            <person name="Coblenz A."/>
            <person name="Coglievina M."/>
            <person name="Coissac E."/>
            <person name="Defoor E."/>
            <person name="Del Bino S."/>
            <person name="Delius H."/>
            <person name="Delneri D."/>
            <person name="de Wergifosse P."/>
            <person name="Dujon B."/>
            <person name="Durand P."/>
            <person name="Entian K.-D."/>
            <person name="Eraso P."/>
            <person name="Escribano V."/>
            <person name="Fabiani L."/>
            <person name="Fartmann B."/>
            <person name="Feroli F."/>
            <person name="Feuermann M."/>
            <person name="Frontali L."/>
            <person name="Garcia-Gonzalez M."/>
            <person name="Garcia-Saez M.I."/>
            <person name="Goffeau A."/>
            <person name="Guerreiro P."/>
            <person name="Hani J."/>
            <person name="Hansen M."/>
            <person name="Hebling U."/>
            <person name="Hernandez K."/>
            <person name="Heumann K."/>
            <person name="Hilger F."/>
            <person name="Hofmann B."/>
            <person name="Indge K.J."/>
            <person name="James C.M."/>
            <person name="Klima R."/>
            <person name="Koetter P."/>
            <person name="Kramer B."/>
            <person name="Kramer W."/>
            <person name="Lauquin G."/>
            <person name="Leuther H."/>
            <person name="Louis E.J."/>
            <person name="Maillier E."/>
            <person name="Marconi A."/>
            <person name="Martegani E."/>
            <person name="Mazon M.J."/>
            <person name="Mazzoni C."/>
            <person name="McReynolds A.D.K."/>
            <person name="Melchioretto P."/>
            <person name="Mewes H.-W."/>
            <person name="Minenkova O."/>
            <person name="Mueller-Auer S."/>
            <person name="Nawrocki A."/>
            <person name="Netter P."/>
            <person name="Neu R."/>
            <person name="Nombela C."/>
            <person name="Oliver S.G."/>
            <person name="Panzeri L."/>
            <person name="Paoluzi S."/>
            <person name="Plevani P."/>
            <person name="Portetelle D."/>
            <person name="Portillo F."/>
            <person name="Potier S."/>
            <person name="Purnelle B."/>
            <person name="Rieger M."/>
            <person name="Riles L."/>
            <person name="Rinaldi T."/>
            <person name="Robben J."/>
            <person name="Rodrigues-Pousada C."/>
            <person name="Rodriguez-Belmonte E."/>
            <person name="Rodriguez-Torres A.M."/>
            <person name="Rose M."/>
            <person name="Ruzzi M."/>
            <person name="Saliola M."/>
            <person name="Sanchez-Perez M."/>
            <person name="Schaefer B."/>
            <person name="Schaefer M."/>
            <person name="Scharfe M."/>
            <person name="Schmidheini T."/>
            <person name="Schreer A."/>
            <person name="Skala J."/>
            <person name="Souciet J.-L."/>
            <person name="Steensma H.Y."/>
            <person name="Talla E."/>
            <person name="Thierry A."/>
            <person name="Vandenbol M."/>
            <person name="van der Aart Q.J.M."/>
            <person name="Van Dyck L."/>
            <person name="Vanoni M."/>
            <person name="Verhasselt P."/>
            <person name="Voet M."/>
            <person name="Volckaert G."/>
            <person name="Wambutt R."/>
            <person name="Watson M.D."/>
            <person name="Weber N."/>
            <person name="Wedler E."/>
            <person name="Wedler H."/>
            <person name="Wipfli P."/>
            <person name="Wolf K."/>
            <person name="Wright L.F."/>
            <person name="Zaccaria P."/>
            <person name="Zimmermann M."/>
            <person name="Zollner A."/>
            <person name="Kleine K."/>
        </authorList>
    </citation>
    <scope>NUCLEOTIDE SEQUENCE [LARGE SCALE GENOMIC DNA]</scope>
    <source>
        <strain>ATCC 204508 / S288c</strain>
    </source>
</reference>
<reference key="4">
    <citation type="journal article" date="2014" name="G3 (Bethesda)">
        <title>The reference genome sequence of Saccharomyces cerevisiae: Then and now.</title>
        <authorList>
            <person name="Engel S.R."/>
            <person name="Dietrich F.S."/>
            <person name="Fisk D.G."/>
            <person name="Binkley G."/>
            <person name="Balakrishnan R."/>
            <person name="Costanzo M.C."/>
            <person name="Dwight S.S."/>
            <person name="Hitz B.C."/>
            <person name="Karra K."/>
            <person name="Nash R.S."/>
            <person name="Weng S."/>
            <person name="Wong E.D."/>
            <person name="Lloyd P."/>
            <person name="Skrzypek M.S."/>
            <person name="Miyasato S.R."/>
            <person name="Simison M."/>
            <person name="Cherry J.M."/>
        </authorList>
    </citation>
    <scope>GENOME REANNOTATION</scope>
    <source>
        <strain>ATCC 204508 / S288c</strain>
    </source>
</reference>
<reference key="5">
    <citation type="journal article" date="1997" name="Mol. Cell. Biol.">
        <title>Rok1p is a putative RNA helicase required for rRNA processing.</title>
        <authorList>
            <person name="Venema J."/>
            <person name="Bousquet-Antonelli C."/>
            <person name="Gelugne J.-P."/>
            <person name="Caizergues-Ferrer M."/>
            <person name="Tollervey D."/>
        </authorList>
    </citation>
    <scope>FUNCTION</scope>
    <scope>SUBCELLULAR LOCATION</scope>
</reference>
<reference key="6">
    <citation type="journal article" date="1998" name="RNA">
        <title>Two mutant forms of the S1/TPR-containing protein Rrp5p affect the 18S rRNA synthesis in Saccharomyces cerevisiae.</title>
        <authorList>
            <person name="Torchet C."/>
            <person name="Jacq C."/>
            <person name="Hermann-Le Denmat S."/>
        </authorList>
    </citation>
    <scope>FUNCTION</scope>
</reference>
<reference key="7">
    <citation type="journal article" date="1999" name="Nucleic Acids Res.">
        <title>ATP hydrolysis activity of the DEAD box protein Rok1p is required for in vivo ROK1 function.</title>
        <authorList>
            <person name="Oh J.Y."/>
            <person name="Kim J."/>
        </authorList>
    </citation>
    <scope>FUNCTION</scope>
    <scope>MUTAGENESIS OF GLY-166; LYS-172 AND ASP-280</scope>
</reference>
<reference key="8">
    <citation type="journal article" date="2002" name="Biochem. Biophys. Res. Commun.">
        <title>Two-hybrid cloning and characterization of OSH3, a yeast oxysterol-binding protein homolog.</title>
        <authorList>
            <person name="Park Y.-U."/>
            <person name="Hwang O."/>
            <person name="Kim J."/>
        </authorList>
    </citation>
    <scope>INTERACTION WITH OSH3</scope>
</reference>
<reference key="9">
    <citation type="journal article" date="2003" name="EMBO J.">
        <title>The path from nucleolar 90S to cytoplasmic 40S pre-ribosomes.</title>
        <authorList>
            <person name="Schaefer T."/>
            <person name="Strauss D."/>
            <person name="Petfalski E."/>
            <person name="Tollervey D."/>
            <person name="Hurt E."/>
        </authorList>
    </citation>
    <scope>ASSOCIATION WITH THE 90S AND 40S PRE-RIBOSOMES</scope>
    <scope>IDENTIFICATION BY MASS SPECTROMETRY</scope>
</reference>
<reference key="10">
    <citation type="journal article" date="2004" name="Biochem. Biophys. Res. Commun.">
        <title>Deletion of OSH3 gene confers resistance against ISP-1 in Saccharomyces cerevisiae.</title>
        <authorList>
            <person name="Yano T."/>
            <person name="Inukai M."/>
            <person name="Isono F."/>
        </authorList>
    </citation>
    <scope>FUNCTION</scope>
</reference>
<reference key="11">
    <citation type="journal article" date="2004" name="Biochem. Biophys. Res. Commun.">
        <title>Posttranscriptional regulation of the karyogamy gene by Kem1p/Xrn1p exoribonuclease and Rok1p RNA helicase of Saccharomyces cerevisiae.</title>
        <authorList>
            <person name="Kim J."/>
            <person name="Jeon S."/>
            <person name="Yang Y.-S."/>
            <person name="Kim J."/>
        </authorList>
    </citation>
    <scope>FUNCTION</scope>
</reference>
<reference key="12">
    <citation type="journal article" date="2004" name="Nucleic Acids Res.">
        <title>U3 snoRNP and Rrp5p associate independently with Saccharomyces cerevisiae 35S pre-rRNA, but Rrp5p is essential for association of Rok1p.</title>
        <authorList>
            <person name="Vos H.R."/>
            <person name="Bax R."/>
            <person name="Faber A.W."/>
            <person name="Vos J.C."/>
            <person name="Raue H.A."/>
        </authorList>
    </citation>
    <scope>INTERACTION WITH THE U3 SNORNA</scope>
    <scope>ASSOCIATION WITH THE PRE-RIBOSOME</scope>
</reference>
<feature type="chain" id="PRO_0000055063" description="ATP-dependent RNA helicase ROK1">
    <location>
        <begin position="1"/>
        <end position="564"/>
    </location>
</feature>
<feature type="domain" description="Helicase ATP-binding" evidence="1">
    <location>
        <begin position="153"/>
        <end position="333"/>
    </location>
</feature>
<feature type="domain" description="Helicase C-terminal" evidence="2">
    <location>
        <begin position="344"/>
        <end position="506"/>
    </location>
</feature>
<feature type="region of interest" description="Disordered" evidence="3">
    <location>
        <begin position="1"/>
        <end position="45"/>
    </location>
</feature>
<feature type="region of interest" description="Disordered" evidence="3">
    <location>
        <begin position="62"/>
        <end position="87"/>
    </location>
</feature>
<feature type="region of interest" description="Disordered" evidence="3">
    <location>
        <begin position="512"/>
        <end position="564"/>
    </location>
</feature>
<feature type="short sequence motif" description="Q motif">
    <location>
        <begin position="122"/>
        <end position="150"/>
    </location>
</feature>
<feature type="short sequence motif" description="DEAD box">
    <location>
        <begin position="280"/>
        <end position="283"/>
    </location>
</feature>
<feature type="compositionally biased region" description="Basic and acidic residues" evidence="3">
    <location>
        <begin position="13"/>
        <end position="23"/>
    </location>
</feature>
<feature type="compositionally biased region" description="Basic and acidic residues" evidence="3">
    <location>
        <begin position="33"/>
        <end position="45"/>
    </location>
</feature>
<feature type="compositionally biased region" description="Basic and acidic residues" evidence="3">
    <location>
        <begin position="62"/>
        <end position="86"/>
    </location>
</feature>
<feature type="compositionally biased region" description="Basic and acidic residues" evidence="3">
    <location>
        <begin position="553"/>
        <end position="564"/>
    </location>
</feature>
<feature type="binding site" evidence="1">
    <location>
        <begin position="166"/>
        <end position="173"/>
    </location>
    <ligand>
        <name>ATP</name>
        <dbReference type="ChEBI" id="CHEBI:30616"/>
    </ligand>
</feature>
<feature type="mutagenesis site" description="No cell growth and 2-fold decrease in ATPase activity in vitro." evidence="4">
    <original>G</original>
    <variation>D</variation>
    <location>
        <position position="166"/>
    </location>
</feature>
<feature type="mutagenesis site" description="Slow cell growth." evidence="4">
    <original>K</original>
    <variation>G</variation>
    <variation>R</variation>
    <variation>S</variation>
    <variation>W</variation>
    <location>
        <position position="172"/>
    </location>
</feature>
<feature type="mutagenesis site" description="No cell growth and drastic decrease in ATPase activity in vitro." evidence="4">
    <original>K</original>
    <variation>L</variation>
    <location>
        <position position="172"/>
    </location>
</feature>
<feature type="mutagenesis site" description="Slow cell growth." evidence="4">
    <original>D</original>
    <variation>A</variation>
    <variation>V</variation>
    <location>
        <position position="280"/>
    </location>
</feature>
<evidence type="ECO:0000255" key="1">
    <source>
        <dbReference type="PROSITE-ProRule" id="PRU00541"/>
    </source>
</evidence>
<evidence type="ECO:0000255" key="2">
    <source>
        <dbReference type="PROSITE-ProRule" id="PRU00542"/>
    </source>
</evidence>
<evidence type="ECO:0000256" key="3">
    <source>
        <dbReference type="SAM" id="MobiDB-lite"/>
    </source>
</evidence>
<evidence type="ECO:0000269" key="4">
    <source>
    </source>
</evidence>
<evidence type="ECO:0000269" key="5">
    <source>
    </source>
</evidence>
<evidence type="ECO:0000269" key="6">
    <source>
    </source>
</evidence>
<evidence type="ECO:0000269" key="7">
    <source>
    </source>
</evidence>
<evidence type="ECO:0000269" key="8">
    <source>
    </source>
</evidence>
<evidence type="ECO:0000269" key="9">
    <source>
    </source>
</evidence>
<evidence type="ECO:0000269" key="10">
    <source>
    </source>
</evidence>
<evidence type="ECO:0000305" key="11"/>
<keyword id="KW-0067">ATP-binding</keyword>
<keyword id="KW-0347">Helicase</keyword>
<keyword id="KW-0378">Hydrolase</keyword>
<keyword id="KW-0547">Nucleotide-binding</keyword>
<keyword id="KW-0539">Nucleus</keyword>
<keyword id="KW-1185">Reference proteome</keyword>
<keyword id="KW-0690">Ribosome biogenesis</keyword>
<keyword id="KW-0694">RNA-binding</keyword>
<keyword id="KW-0698">rRNA processing</keyword>
<gene>
    <name type="primary">ROK1</name>
    <name type="ordered locus">YGL171W</name>
    <name type="ORF">G1651</name>
</gene>
<accession>P45818</accession>
<accession>D6VTY1</accession>
<proteinExistence type="evidence at protein level"/>
<organism>
    <name type="scientific">Saccharomyces cerevisiae (strain ATCC 204508 / S288c)</name>
    <name type="common">Baker's yeast</name>
    <dbReference type="NCBI Taxonomy" id="559292"/>
    <lineage>
        <taxon>Eukaryota</taxon>
        <taxon>Fungi</taxon>
        <taxon>Dikarya</taxon>
        <taxon>Ascomycota</taxon>
        <taxon>Saccharomycotina</taxon>
        <taxon>Saccharomycetes</taxon>
        <taxon>Saccharomycetales</taxon>
        <taxon>Saccharomycetaceae</taxon>
        <taxon>Saccharomyces</taxon>
    </lineage>
</organism>